<reference key="1">
    <citation type="journal article" date="1988" name="Mol. Cell. Biol.">
        <title>Ty3, a yeast retrotransposon associated with tRNA genes, has homology to animal retroviruses.</title>
        <authorList>
            <person name="Hansen L.J."/>
            <person name="Chalker D.L."/>
            <person name="Sandmeyer S.B."/>
        </authorList>
    </citation>
    <scope>NUCLEOTIDE SEQUENCE [GENOMIC DNA]</scope>
</reference>
<reference key="2">
    <citation type="journal article" date="1997" name="Nature">
        <title>The nucleotide sequence of Saccharomyces cerevisiae chromosome IX.</title>
        <authorList>
            <person name="Churcher C.M."/>
            <person name="Bowman S."/>
            <person name="Badcock K."/>
            <person name="Bankier A.T."/>
            <person name="Brown D."/>
            <person name="Chillingworth T."/>
            <person name="Connor R."/>
            <person name="Devlin K."/>
            <person name="Gentles S."/>
            <person name="Hamlin N."/>
            <person name="Harris D.E."/>
            <person name="Horsnell T."/>
            <person name="Hunt S."/>
            <person name="Jagels K."/>
            <person name="Jones M."/>
            <person name="Lye G."/>
            <person name="Moule S."/>
            <person name="Odell C."/>
            <person name="Pearson D."/>
            <person name="Rajandream M.A."/>
            <person name="Rice P."/>
            <person name="Rowley N."/>
            <person name="Skelton J."/>
            <person name="Smith V."/>
            <person name="Walsh S.V."/>
            <person name="Whitehead S."/>
            <person name="Barrell B.G."/>
        </authorList>
    </citation>
    <scope>NUCLEOTIDE SEQUENCE [LARGE SCALE GENOMIC DNA]</scope>
    <source>
        <strain>ATCC 204508 / S288c</strain>
    </source>
</reference>
<reference key="3">
    <citation type="journal article" date="2014" name="G3 (Bethesda)">
        <title>The reference genome sequence of Saccharomyces cerevisiae: Then and now.</title>
        <authorList>
            <person name="Engel S.R."/>
            <person name="Dietrich F.S."/>
            <person name="Fisk D.G."/>
            <person name="Binkley G."/>
            <person name="Balakrishnan R."/>
            <person name="Costanzo M.C."/>
            <person name="Dwight S.S."/>
            <person name="Hitz B.C."/>
            <person name="Karra K."/>
            <person name="Nash R.S."/>
            <person name="Weng S."/>
            <person name="Wong E.D."/>
            <person name="Lloyd P."/>
            <person name="Skrzypek M.S."/>
            <person name="Miyasato S.R."/>
            <person name="Simison M."/>
            <person name="Cherry J.M."/>
        </authorList>
    </citation>
    <scope>GENOME REANNOTATION</scope>
    <source>
        <strain>ATCC 204508 / S288c</strain>
    </source>
</reference>
<reference key="4">
    <citation type="journal article" date="2007" name="Genome Res.">
        <title>Approaching a complete repository of sequence-verified protein-encoding clones for Saccharomyces cerevisiae.</title>
        <authorList>
            <person name="Hu Y."/>
            <person name="Rolfs A."/>
            <person name="Bhullar B."/>
            <person name="Murthy T.V.S."/>
            <person name="Zhu C."/>
            <person name="Berger M.F."/>
            <person name="Camargo A.A."/>
            <person name="Kelley F."/>
            <person name="McCarron S."/>
            <person name="Jepson D."/>
            <person name="Richardson A."/>
            <person name="Raphael J."/>
            <person name="Moreira D."/>
            <person name="Taycher E."/>
            <person name="Zuo D."/>
            <person name="Mohr S."/>
            <person name="Kane M.F."/>
            <person name="Williamson J."/>
            <person name="Simpson A.J.G."/>
            <person name="Bulyk M.L."/>
            <person name="Harlow E."/>
            <person name="Marsischky G."/>
            <person name="Kolodner R.D."/>
            <person name="LaBaer J."/>
        </authorList>
    </citation>
    <scope>NUCLEOTIDE SEQUENCE [GENOMIC DNA]</scope>
    <source>
        <strain>ATCC 204508 / S288c</strain>
    </source>
</reference>
<reference key="5">
    <citation type="journal article" date="1998" name="Genome Res.">
        <title>Transposable elements and genome organization: a comprehensive survey of retrotransposons revealed by the complete Saccharomyces cerevisiae genome sequence.</title>
        <authorList>
            <person name="Kim J.M."/>
            <person name="Vanguri S."/>
            <person name="Boeke J.D."/>
            <person name="Gabriel A."/>
            <person name="Voytas D.F."/>
        </authorList>
    </citation>
    <scope>NOMENCLATURE</scope>
</reference>
<reference key="6">
    <citation type="journal article" date="2005" name="Cytogenet. Genome Res.">
        <title>Happy together: the life and times of Ty retrotransposons and their hosts.</title>
        <authorList>
            <person name="Lesage P."/>
            <person name="Todeschini A.L."/>
        </authorList>
    </citation>
    <scope>REVIEW</scope>
</reference>
<gene>
    <name type="primary">TY3A-I</name>
    <name type="synonym">YILWTy3-1 GAG</name>
    <name type="ordered locus">YIL082W</name>
</gene>
<name>YI31A_YEAST</name>
<organism>
    <name type="scientific">Saccharomyces cerevisiae (strain ATCC 204508 / S288c)</name>
    <name type="common">Baker's yeast</name>
    <dbReference type="NCBI Taxonomy" id="559292"/>
    <lineage>
        <taxon>Eukaryota</taxon>
        <taxon>Fungi</taxon>
        <taxon>Dikarya</taxon>
        <taxon>Ascomycota</taxon>
        <taxon>Saccharomycotina</taxon>
        <taxon>Saccharomycetes</taxon>
        <taxon>Saccharomycetales</taxon>
        <taxon>Saccharomycetaceae</taxon>
        <taxon>Saccharomyces</taxon>
    </lineage>
</organism>
<evidence type="ECO:0000250" key="1"/>
<evidence type="ECO:0000250" key="2">
    <source>
        <dbReference type="UniProtKB" id="Q12173"/>
    </source>
</evidence>
<evidence type="ECO:0000255" key="3">
    <source>
        <dbReference type="PROSITE-ProRule" id="PRU00047"/>
    </source>
</evidence>
<evidence type="ECO:0000305" key="4"/>
<dbReference type="EMBL" id="M23367">
    <property type="protein sequence ID" value="AAA35183.1"/>
    <property type="status" value="ALT_INIT"/>
    <property type="molecule type" value="Genomic_DNA"/>
</dbReference>
<dbReference type="EMBL" id="Z46728">
    <property type="protein sequence ID" value="CAA86712.1"/>
    <property type="molecule type" value="Genomic_DNA"/>
</dbReference>
<dbReference type="EMBL" id="AY557875">
    <property type="protein sequence ID" value="AAS56201.1"/>
    <property type="molecule type" value="Genomic_DNA"/>
</dbReference>
<dbReference type="EMBL" id="BK006942">
    <property type="status" value="NOT_ANNOTATED_CDS"/>
    <property type="molecule type" value="Genomic_DNA"/>
</dbReference>
<dbReference type="PIR" id="S41555">
    <property type="entry name" value="S41555"/>
</dbReference>
<dbReference type="SMR" id="Q99219"/>
<dbReference type="DIP" id="DIP-8996N"/>
<dbReference type="FunCoup" id="Q99219">
    <property type="interactions" value="1"/>
</dbReference>
<dbReference type="IntAct" id="Q99219">
    <property type="interactions" value="1"/>
</dbReference>
<dbReference type="MINT" id="Q99219"/>
<dbReference type="STRING" id="4932.YIL082W"/>
<dbReference type="PaxDb" id="4932-YIL082W"/>
<dbReference type="PeptideAtlas" id="Q99219"/>
<dbReference type="EnsemblFungi" id="YIL082W_mRNA">
    <molecule id="Q99219-1"/>
    <property type="protein sequence ID" value="YIL082W"/>
    <property type="gene ID" value="YIL082W"/>
</dbReference>
<dbReference type="AGR" id="SGD:S000001344"/>
<dbReference type="SGD" id="S000001344">
    <property type="gene designation" value="YIL082W"/>
</dbReference>
<dbReference type="eggNOG" id="KOG0017">
    <property type="taxonomic scope" value="Eukaryota"/>
</dbReference>
<dbReference type="HOGENOM" id="CLU_966938_0_0_1"/>
<dbReference type="InParanoid" id="Q99219"/>
<dbReference type="OMA" id="NEYTISA"/>
<dbReference type="Proteomes" id="UP000002311">
    <property type="component" value="Chromosome IX"/>
</dbReference>
<dbReference type="RNAct" id="Q99219">
    <property type="molecule type" value="protein"/>
</dbReference>
<dbReference type="GO" id="GO:0005737">
    <property type="term" value="C:cytoplasm"/>
    <property type="evidence" value="ECO:0007669"/>
    <property type="project" value="UniProtKB-SubCell"/>
</dbReference>
<dbReference type="GO" id="GO:0000943">
    <property type="term" value="C:retrotransposon nucleocapsid"/>
    <property type="evidence" value="ECO:0000314"/>
    <property type="project" value="SGD"/>
</dbReference>
<dbReference type="GO" id="GO:0003677">
    <property type="term" value="F:DNA binding"/>
    <property type="evidence" value="ECO:0000314"/>
    <property type="project" value="SGD"/>
</dbReference>
<dbReference type="GO" id="GO:0008270">
    <property type="term" value="F:zinc ion binding"/>
    <property type="evidence" value="ECO:0007669"/>
    <property type="project" value="UniProtKB-KW"/>
</dbReference>
<dbReference type="GO" id="GO:0032197">
    <property type="term" value="P:retrotransposition"/>
    <property type="evidence" value="ECO:0000315"/>
    <property type="project" value="SGD"/>
</dbReference>
<dbReference type="GO" id="GO:0075523">
    <property type="term" value="P:viral translational frameshifting"/>
    <property type="evidence" value="ECO:0007669"/>
    <property type="project" value="UniProtKB-KW"/>
</dbReference>
<dbReference type="InterPro" id="IPR045358">
    <property type="entry name" value="Ty3_capsid"/>
</dbReference>
<dbReference type="InterPro" id="IPR001878">
    <property type="entry name" value="Znf_CCHC"/>
</dbReference>
<dbReference type="InterPro" id="IPR036875">
    <property type="entry name" value="Znf_CCHC_sf"/>
</dbReference>
<dbReference type="Pfam" id="PF19259">
    <property type="entry name" value="Ty3_capsid"/>
    <property type="match status" value="1"/>
</dbReference>
<dbReference type="SMART" id="SM00343">
    <property type="entry name" value="ZnF_C2HC"/>
    <property type="match status" value="1"/>
</dbReference>
<dbReference type="SUPFAM" id="SSF57756">
    <property type="entry name" value="Retrovirus zinc finger-like domains"/>
    <property type="match status" value="1"/>
</dbReference>
<dbReference type="PROSITE" id="PS50158">
    <property type="entry name" value="ZF_CCHC"/>
    <property type="match status" value="1"/>
</dbReference>
<feature type="initiator methionine" description="Removed" evidence="2">
    <location>
        <position position="1"/>
    </location>
</feature>
<feature type="chain" id="PRO_0000279376" description="Transposon Ty3-I Gag polyprotein">
    <location>
        <begin position="2"/>
        <end position="290"/>
    </location>
</feature>
<feature type="chain" id="PRO_0000279377" description="Capsid protein">
    <location>
        <begin position="2"/>
        <end position="207"/>
    </location>
</feature>
<feature type="peptide" id="PRO_0000279378" description="Spacer peptide p3">
    <location>
        <begin position="208"/>
        <end position="233"/>
    </location>
</feature>
<feature type="chain" id="PRO_0000279379" description="Nucleocapsid protein p9">
    <location>
        <begin position="234"/>
        <end position="290"/>
    </location>
</feature>
<feature type="zinc finger region" description="CCHC-type" evidence="3">
    <location>
        <begin position="265"/>
        <end position="282"/>
    </location>
</feature>
<feature type="site" description="Cleavage; by Ty3 protease">
    <location>
        <begin position="207"/>
        <end position="208"/>
    </location>
</feature>
<feature type="site" description="Cleavage; by Ty3 protease">
    <location>
        <begin position="233"/>
        <end position="234"/>
    </location>
</feature>
<feature type="modified residue" description="N-acetylserine" evidence="2">
    <location>
        <position position="2"/>
    </location>
</feature>
<sequence length="290" mass="34100">MSFMDQIPGGGNYPKLPVECLPNFPIQPSLTFRGRNDSHKLKNFISEIMLNMSMISWPNDASRIVYCRRHLLNPAAQWANDFVQEQGILEITFDTFIQGLYQHFYKPPDINKIFNAITQLSEAKLGIERLNQRFRKIWDRMPPDFMTEKAAIMTYTRLLTKETYNIVRMHKPETLKDAMEEAYQTTALTERFFPGFELDADGDTIIGATTHLQEEYDSDYDSEDNLTQNRYVHTVRTRRSYNKPMSNHRNRRNNNASREECIKNRLCFYCKKEGHRLNECRARKASSNRS</sequence>
<protein>
    <recommendedName>
        <fullName>Transposon Ty3-I Gag polyprotein</fullName>
    </recommendedName>
    <alternativeName>
        <fullName>Gag3</fullName>
    </alternativeName>
    <alternativeName>
        <fullName>Transposon Ty3-2 protein A</fullName>
        <shortName>TY3A</shortName>
    </alternativeName>
    <component>
        <recommendedName>
            <fullName>Capsid protein</fullName>
            <shortName>CA</shortName>
        </recommendedName>
        <alternativeName>
            <fullName>p24</fullName>
        </alternativeName>
    </component>
    <component>
        <recommendedName>
            <fullName>Spacer peptide p3</fullName>
        </recommendedName>
    </component>
    <component>
        <recommendedName>
            <fullName>Nucleocapsid protein p9</fullName>
            <shortName>NC</shortName>
        </recommendedName>
        <alternativeName>
            <fullName>p7</fullName>
        </alternativeName>
    </component>
</protein>
<comment type="function">
    <text>Capsid protein (CA) is the structural component of the virus-like particle (VLP), forming the shell that encapsulates the retrotransposons dimeric RNA genome.</text>
</comment>
<comment type="function">
    <text evidence="1">Nucleocapsid protein p9 (NC) forms the nucleocore that coats the retro-elements dimeric RNA. Binds these RNAs through its zinc fingers (By similarity). Promotes primer tRNA(i)-Met annealing to the multipartite primer-binding site (PBS), dimerization of Ty3 RNA and initiation of reverse transcription.</text>
</comment>
<comment type="subcellular location">
    <subcellularLocation>
        <location>Cytoplasm</location>
    </subcellularLocation>
</comment>
<comment type="alternative products">
    <event type="ribosomal frameshifting"/>
    <isoform>
        <id>Q99219-1</id>
        <name>Transposon Ty3-I Gag polyprotein</name>
        <sequence type="displayed"/>
    </isoform>
    <isoform>
        <id>Q7LHG5-1</id>
        <name>Transposon Ty3-I Gag-Pol polyprotein</name>
        <sequence type="external"/>
    </isoform>
    <text>The Gag-Pol polyprotein is generated by a +1 ribosomal frameshift.</text>
</comment>
<comment type="domain">
    <text>The N-terminal domain of NC, but not its zinc finger, is required for nucleoprotein complex formation and its chaperone activities.</text>
</comment>
<comment type="miscellaneous">
    <text>Retrotransposons are mobile genetic entities that are able to replicate via an RNA intermediate and a reverse transcription step. In contrast to retroviruses, retrotransposons are non-infectious, lack an envelope and remain intracellular. Ty3 retrotransposons belong to the gypsy-like elements (metaviridae).</text>
</comment>
<comment type="miscellaneous">
    <molecule>Isoform Transposon Ty3-I Gag polyprotein</molecule>
    <text>Produced by conventional translation.</text>
</comment>
<comment type="sequence caution" evidence="4">
    <conflict type="erroneous initiation">
        <sequence resource="EMBL-CDS" id="AAA35183"/>
    </conflict>
</comment>
<proteinExistence type="inferred from homology"/>
<keyword id="KW-0007">Acetylation</keyword>
<keyword id="KW-0963">Cytoplasm</keyword>
<keyword id="KW-0479">Metal-binding</keyword>
<keyword id="KW-1185">Reference proteome</keyword>
<keyword id="KW-0688">Ribosomal frameshifting</keyword>
<keyword id="KW-0814">Transposable element</keyword>
<keyword id="KW-0862">Zinc</keyword>
<keyword id="KW-0863">Zinc-finger</keyword>
<accession>Q99219</accession>